<gene>
    <name type="primary">mnhA1</name>
    <name type="ordered locus">SAR0914</name>
</gene>
<reference key="1">
    <citation type="journal article" date="2004" name="Proc. Natl. Acad. Sci. U.S.A.">
        <title>Complete genomes of two clinical Staphylococcus aureus strains: evidence for the rapid evolution of virulence and drug resistance.</title>
        <authorList>
            <person name="Holden M.T.G."/>
            <person name="Feil E.J."/>
            <person name="Lindsay J.A."/>
            <person name="Peacock S.J."/>
            <person name="Day N.P.J."/>
            <person name="Enright M.C."/>
            <person name="Foster T.J."/>
            <person name="Moore C.E."/>
            <person name="Hurst L."/>
            <person name="Atkin R."/>
            <person name="Barron A."/>
            <person name="Bason N."/>
            <person name="Bentley S.D."/>
            <person name="Chillingworth C."/>
            <person name="Chillingworth T."/>
            <person name="Churcher C."/>
            <person name="Clark L."/>
            <person name="Corton C."/>
            <person name="Cronin A."/>
            <person name="Doggett J."/>
            <person name="Dowd L."/>
            <person name="Feltwell T."/>
            <person name="Hance Z."/>
            <person name="Harris B."/>
            <person name="Hauser H."/>
            <person name="Holroyd S."/>
            <person name="Jagels K."/>
            <person name="James K.D."/>
            <person name="Lennard N."/>
            <person name="Line A."/>
            <person name="Mayes R."/>
            <person name="Moule S."/>
            <person name="Mungall K."/>
            <person name="Ormond D."/>
            <person name="Quail M.A."/>
            <person name="Rabbinowitsch E."/>
            <person name="Rutherford K.M."/>
            <person name="Sanders M."/>
            <person name="Sharp S."/>
            <person name="Simmonds M."/>
            <person name="Stevens K."/>
            <person name="Whitehead S."/>
            <person name="Barrell B.G."/>
            <person name="Spratt B.G."/>
            <person name="Parkhill J."/>
        </authorList>
    </citation>
    <scope>NUCLEOTIDE SEQUENCE [LARGE SCALE GENOMIC DNA]</scope>
    <source>
        <strain>MRSA252</strain>
    </source>
</reference>
<protein>
    <recommendedName>
        <fullName>Na(+)/H(+) antiporter subunit A1</fullName>
    </recommendedName>
    <alternativeName>
        <fullName>Mnh complex subunit A1</fullName>
    </alternativeName>
</protein>
<dbReference type="EMBL" id="BX571856">
    <property type="protein sequence ID" value="CAG39920.1"/>
    <property type="molecule type" value="Genomic_DNA"/>
</dbReference>
<dbReference type="RefSeq" id="WP_000054599.1">
    <property type="nucleotide sequence ID" value="NC_002952.2"/>
</dbReference>
<dbReference type="SMR" id="Q6GID6"/>
<dbReference type="KEGG" id="sar:SAR0914"/>
<dbReference type="HOGENOM" id="CLU_007100_2_1_9"/>
<dbReference type="Proteomes" id="UP000000596">
    <property type="component" value="Chromosome"/>
</dbReference>
<dbReference type="GO" id="GO:0005886">
    <property type="term" value="C:plasma membrane"/>
    <property type="evidence" value="ECO:0007669"/>
    <property type="project" value="UniProtKB-SubCell"/>
</dbReference>
<dbReference type="GO" id="GO:0015297">
    <property type="term" value="F:antiporter activity"/>
    <property type="evidence" value="ECO:0007669"/>
    <property type="project" value="UniProtKB-KW"/>
</dbReference>
<dbReference type="GO" id="GO:1902600">
    <property type="term" value="P:proton transmembrane transport"/>
    <property type="evidence" value="ECO:0007669"/>
    <property type="project" value="UniProtKB-KW"/>
</dbReference>
<dbReference type="GO" id="GO:0006814">
    <property type="term" value="P:sodium ion transport"/>
    <property type="evidence" value="ECO:0007669"/>
    <property type="project" value="UniProtKB-KW"/>
</dbReference>
<dbReference type="InterPro" id="IPR050616">
    <property type="entry name" value="CPA3_Na-H_Antiporter_A"/>
</dbReference>
<dbReference type="InterPro" id="IPR005663">
    <property type="entry name" value="MrpA/MnhA1/PhaAB"/>
</dbReference>
<dbReference type="InterPro" id="IPR025383">
    <property type="entry name" value="MrpA_C/MbhD"/>
</dbReference>
<dbReference type="InterPro" id="IPR046806">
    <property type="entry name" value="MrpA_C/MbhE"/>
</dbReference>
<dbReference type="InterPro" id="IPR001750">
    <property type="entry name" value="ND/Mrp_TM"/>
</dbReference>
<dbReference type="InterPro" id="IPR001516">
    <property type="entry name" value="Proton_antipo_N"/>
</dbReference>
<dbReference type="NCBIfam" id="TIGR00940">
    <property type="entry name" value="2a6301s01"/>
    <property type="match status" value="1"/>
</dbReference>
<dbReference type="NCBIfam" id="NF009285">
    <property type="entry name" value="PRK12645.1"/>
    <property type="match status" value="1"/>
</dbReference>
<dbReference type="PANTHER" id="PTHR43373">
    <property type="entry name" value="NA(+)/H(+) ANTIPORTER SUBUNIT"/>
    <property type="match status" value="1"/>
</dbReference>
<dbReference type="PANTHER" id="PTHR43373:SF1">
    <property type="entry name" value="NA(+)_H(+) ANTIPORTER SUBUNIT A"/>
    <property type="match status" value="1"/>
</dbReference>
<dbReference type="Pfam" id="PF13244">
    <property type="entry name" value="MbhD"/>
    <property type="match status" value="1"/>
</dbReference>
<dbReference type="Pfam" id="PF20501">
    <property type="entry name" value="MbhE"/>
    <property type="match status" value="1"/>
</dbReference>
<dbReference type="Pfam" id="PF00361">
    <property type="entry name" value="Proton_antipo_M"/>
    <property type="match status" value="1"/>
</dbReference>
<dbReference type="Pfam" id="PF00662">
    <property type="entry name" value="Proton_antipo_N"/>
    <property type="match status" value="1"/>
</dbReference>
<dbReference type="PRINTS" id="PR01434">
    <property type="entry name" value="NADHDHGNASE5"/>
</dbReference>
<dbReference type="PRINTS" id="PR01435">
    <property type="entry name" value="NPOXDRDTASE5"/>
</dbReference>
<sequence>MSLLHIAVILPLIFALIIPILYRFFKRIHLGWFVLPVPIVIFIYMLTLIKTTMSGNTVMKTLNWMPHFGMNFDLYLDGLGLLFSLLISGIGSLVVLYSIGYLSKSEQLGNFYCYLLLFMGAMLGVVLSDNVIILYLFWELTSFSSFLLISFWRERQASIYGAQKSLIITVFGGLSLLGGIILLAIPTQSFSIQYMIQHASEIQNSPFFIFAMILIMIGAFTKSAQFPFYIWLPDAMEAPTPVSAYLHSATMVKAGLYLIARMTPIFAASQGWIWTVTLVGLITLFWASLNATKQQDLKGILAFSTVSQLGMIMAMLGIGAISYHYQGDDSKIYAAAFTAAIFHLINHATFKGALFMITGAVDHSTGTRDVKKLGGLLTIMPISFTITVITALSMAGVPPFNGFLSKESFLETTFTASKANLFSVDTLGYLFPIIGIVGSVFTFVYSIKFIMHIFFGQYKPEQLPKKAHEVSILMLLSPAILATLVIVFGLFPGILTNSIIEPATSSINHTVIDDVEFHMFHGLTPAFLSTLVIYILGILLIVTFSYWVKLLQRQPGKLTFNYWYNRSANVIPNYSEKMTNSYVTDYSRNNLVIIFGALILLTFVTVFSVPFNINFKDVSPIRIFEVCIVILLLSAAFLILFAKSRLFSIIMLSAVGYAVSVLFIFFKAPDLALTQFVVESISTALFLLCFYHLPNLNRYNEKRSFQLTNALIAGGVGLSVIIIGLIAYGNRHFESISKFYQEHVYDLAHGKNMVNVILVDFRGMDTLFESSVLGIAGLAVYTMIKLRKKRQTQGNEVKNHE</sequence>
<keyword id="KW-0050">Antiport</keyword>
<keyword id="KW-1003">Cell membrane</keyword>
<keyword id="KW-0375">Hydrogen ion transport</keyword>
<keyword id="KW-0406">Ion transport</keyword>
<keyword id="KW-0472">Membrane</keyword>
<keyword id="KW-0915">Sodium</keyword>
<keyword id="KW-0739">Sodium transport</keyword>
<keyword id="KW-0812">Transmembrane</keyword>
<keyword id="KW-1133">Transmembrane helix</keyword>
<keyword id="KW-0813">Transport</keyword>
<name>MNHA1_STAAR</name>
<accession>Q6GID6</accession>
<comment type="function">
    <text>Mnh complex is a Na(+)/H(+) antiporter involved in Na(+) excretion.</text>
</comment>
<comment type="activity regulation">
    <text>Na(+) extrusion is completely inhibited by the H(+) conductor carbonyl cyanide m-chlorophenylhydrazone (CCCP).</text>
</comment>
<comment type="subunit">
    <text evidence="1">May form a heterooligomeric complex that consists of seven subunits: mnhA1, mnhB1, mnhC1, mnhD1, mnhE1, mnhF1 and mnhG1.</text>
</comment>
<comment type="subcellular location">
    <subcellularLocation>
        <location evidence="3">Cell membrane</location>
        <topology evidence="3">Multi-pass membrane protein</topology>
    </subcellularLocation>
</comment>
<comment type="similarity">
    <text evidence="3">Belongs to the CPA3 antiporters (TC 2.A.63) subunit A family.</text>
</comment>
<proteinExistence type="inferred from homology"/>
<organism>
    <name type="scientific">Staphylococcus aureus (strain MRSA252)</name>
    <dbReference type="NCBI Taxonomy" id="282458"/>
    <lineage>
        <taxon>Bacteria</taxon>
        <taxon>Bacillati</taxon>
        <taxon>Bacillota</taxon>
        <taxon>Bacilli</taxon>
        <taxon>Bacillales</taxon>
        <taxon>Staphylococcaceae</taxon>
        <taxon>Staphylococcus</taxon>
    </lineage>
</organism>
<evidence type="ECO:0000250" key="1"/>
<evidence type="ECO:0000255" key="2"/>
<evidence type="ECO:0000305" key="3"/>
<feature type="chain" id="PRO_0000217069" description="Na(+)/H(+) antiporter subunit A1">
    <location>
        <begin position="1"/>
        <end position="801"/>
    </location>
</feature>
<feature type="transmembrane region" description="Helical" evidence="2">
    <location>
        <begin position="4"/>
        <end position="25"/>
    </location>
</feature>
<feature type="transmembrane region" description="Helical" evidence="2">
    <location>
        <begin position="30"/>
        <end position="49"/>
    </location>
</feature>
<feature type="transmembrane region" description="Helical" evidence="2">
    <location>
        <begin position="79"/>
        <end position="101"/>
    </location>
</feature>
<feature type="transmembrane region" description="Helical" evidence="2">
    <location>
        <begin position="108"/>
        <end position="127"/>
    </location>
</feature>
<feature type="transmembrane region" description="Helical" evidence="2">
    <location>
        <begin position="131"/>
        <end position="153"/>
    </location>
</feature>
<feature type="transmembrane region" description="Helical" evidence="2">
    <location>
        <begin position="166"/>
        <end position="188"/>
    </location>
</feature>
<feature type="transmembrane region" description="Helical" evidence="2">
    <location>
        <begin position="208"/>
        <end position="230"/>
    </location>
</feature>
<feature type="transmembrane region" description="Helical" evidence="2">
    <location>
        <begin position="243"/>
        <end position="265"/>
    </location>
</feature>
<feature type="transmembrane region" description="Helical" evidence="2">
    <location>
        <begin position="270"/>
        <end position="289"/>
    </location>
</feature>
<feature type="transmembrane region" description="Helical" evidence="2">
    <location>
        <begin position="302"/>
        <end position="324"/>
    </location>
</feature>
<feature type="transmembrane region" description="Helical" evidence="2">
    <location>
        <begin position="339"/>
        <end position="361"/>
    </location>
</feature>
<feature type="transmembrane region" description="Helical" evidence="2">
    <location>
        <begin position="373"/>
        <end position="395"/>
    </location>
</feature>
<feature type="transmembrane region" description="Helical" evidence="2">
    <location>
        <begin position="429"/>
        <end position="451"/>
    </location>
</feature>
<feature type="transmembrane region" description="Helical" evidence="2">
    <location>
        <begin position="472"/>
        <end position="494"/>
    </location>
</feature>
<feature type="transmembrane region" description="Helical" evidence="2">
    <location>
        <begin position="526"/>
        <end position="548"/>
    </location>
</feature>
<feature type="transmembrane region" description="Helical" evidence="2">
    <location>
        <begin position="589"/>
        <end position="611"/>
    </location>
</feature>
<feature type="transmembrane region" description="Helical" evidence="2">
    <location>
        <begin position="621"/>
        <end position="641"/>
    </location>
</feature>
<feature type="transmembrane region" description="Helical" evidence="2">
    <location>
        <begin position="646"/>
        <end position="668"/>
    </location>
</feature>
<feature type="transmembrane region" description="Helical" evidence="2">
    <location>
        <begin position="672"/>
        <end position="694"/>
    </location>
</feature>
<feature type="transmembrane region" description="Helical" evidence="2">
    <location>
        <begin position="707"/>
        <end position="729"/>
    </location>
</feature>
<feature type="transmembrane region" description="Helical" evidence="2">
    <location>
        <begin position="767"/>
        <end position="784"/>
    </location>
</feature>